<organism>
    <name type="scientific">Escherichia coli (strain ATCC 8739 / DSM 1576 / NBRC 3972 / NCIMB 8545 / WDCM 00012 / Crooks)</name>
    <dbReference type="NCBI Taxonomy" id="481805"/>
    <lineage>
        <taxon>Bacteria</taxon>
        <taxon>Pseudomonadati</taxon>
        <taxon>Pseudomonadota</taxon>
        <taxon>Gammaproteobacteria</taxon>
        <taxon>Enterobacterales</taxon>
        <taxon>Enterobacteriaceae</taxon>
        <taxon>Escherichia</taxon>
    </lineage>
</organism>
<sequence length="277" mass="30560">MKKTQRKEIENVTNITGVRQIELWRRDDLQHPRLDEVAEEVPVALVYNGISHVVMMASPKDLEYFALGFSLSEGIIESPRDIFGMDVVPSCNGLEVQIELSSRRFMGLKERRRALAGRTGCGVCGVEQLNDIGKPVQPLPFTQTFDLNKLDDALRHLNDFQPVGQLTGCTHAAAWMLPSGELVGGHEDVGRHVALDKLLGRRSQEGESWQQGAVLVSSRASYEMVQKSAMCGVEILFAVSAATTLAVEVAERCNLTLVGFCKPGRATVYTHPQRLSN</sequence>
<name>FDHD_ECOLC</name>
<protein>
    <recommendedName>
        <fullName evidence="1">Sulfur carrier protein FdhD</fullName>
    </recommendedName>
</protein>
<evidence type="ECO:0000255" key="1">
    <source>
        <dbReference type="HAMAP-Rule" id="MF_00187"/>
    </source>
</evidence>
<gene>
    <name evidence="1" type="primary">fdhD</name>
    <name type="ordered locus">EcolC_4122</name>
</gene>
<keyword id="KW-0963">Cytoplasm</keyword>
<keyword id="KW-0501">Molybdenum cofactor biosynthesis</keyword>
<dbReference type="EMBL" id="CP000946">
    <property type="protein sequence ID" value="ACA79720.1"/>
    <property type="molecule type" value="Genomic_DNA"/>
</dbReference>
<dbReference type="RefSeq" id="WP_000753617.1">
    <property type="nucleotide sequence ID" value="NZ_MTFT01000008.1"/>
</dbReference>
<dbReference type="SMR" id="B1IVI3"/>
<dbReference type="GeneID" id="93778043"/>
<dbReference type="KEGG" id="ecl:EcolC_4122"/>
<dbReference type="HOGENOM" id="CLU_056887_2_0_6"/>
<dbReference type="GO" id="GO:0005737">
    <property type="term" value="C:cytoplasm"/>
    <property type="evidence" value="ECO:0007669"/>
    <property type="project" value="UniProtKB-SubCell"/>
</dbReference>
<dbReference type="GO" id="GO:0097163">
    <property type="term" value="F:sulfur carrier activity"/>
    <property type="evidence" value="ECO:0007669"/>
    <property type="project" value="UniProtKB-UniRule"/>
</dbReference>
<dbReference type="GO" id="GO:0016783">
    <property type="term" value="F:sulfurtransferase activity"/>
    <property type="evidence" value="ECO:0007669"/>
    <property type="project" value="InterPro"/>
</dbReference>
<dbReference type="GO" id="GO:0006777">
    <property type="term" value="P:Mo-molybdopterin cofactor biosynthetic process"/>
    <property type="evidence" value="ECO:0007669"/>
    <property type="project" value="UniProtKB-UniRule"/>
</dbReference>
<dbReference type="FunFam" id="3.10.20.10:FF:000003">
    <property type="entry name" value="Sulfur carrier protein FdhD"/>
    <property type="match status" value="1"/>
</dbReference>
<dbReference type="FunFam" id="3.40.140.10:FF:000027">
    <property type="entry name" value="Sulfur carrier protein FdhD"/>
    <property type="match status" value="1"/>
</dbReference>
<dbReference type="Gene3D" id="3.10.20.10">
    <property type="match status" value="1"/>
</dbReference>
<dbReference type="Gene3D" id="3.40.140.10">
    <property type="entry name" value="Cytidine Deaminase, domain 2"/>
    <property type="match status" value="1"/>
</dbReference>
<dbReference type="HAMAP" id="MF_00187">
    <property type="entry name" value="FdhD"/>
    <property type="match status" value="1"/>
</dbReference>
<dbReference type="InterPro" id="IPR016193">
    <property type="entry name" value="Cytidine_deaminase-like"/>
</dbReference>
<dbReference type="InterPro" id="IPR003786">
    <property type="entry name" value="FdhD"/>
</dbReference>
<dbReference type="NCBIfam" id="TIGR00129">
    <property type="entry name" value="fdhD_narQ"/>
    <property type="match status" value="1"/>
</dbReference>
<dbReference type="PANTHER" id="PTHR30592">
    <property type="entry name" value="FORMATE DEHYDROGENASE"/>
    <property type="match status" value="1"/>
</dbReference>
<dbReference type="PANTHER" id="PTHR30592:SF1">
    <property type="entry name" value="SULFUR CARRIER PROTEIN FDHD"/>
    <property type="match status" value="1"/>
</dbReference>
<dbReference type="Pfam" id="PF02634">
    <property type="entry name" value="FdhD-NarQ"/>
    <property type="match status" value="1"/>
</dbReference>
<dbReference type="PIRSF" id="PIRSF015626">
    <property type="entry name" value="FdhD"/>
    <property type="match status" value="1"/>
</dbReference>
<dbReference type="SUPFAM" id="SSF53927">
    <property type="entry name" value="Cytidine deaminase-like"/>
    <property type="match status" value="1"/>
</dbReference>
<feature type="chain" id="PRO_1000077436" description="Sulfur carrier protein FdhD">
    <location>
        <begin position="1"/>
        <end position="277"/>
    </location>
</feature>
<feature type="active site" description="Cysteine persulfide intermediate" evidence="1">
    <location>
        <position position="121"/>
    </location>
</feature>
<feature type="binding site" evidence="1">
    <location>
        <begin position="260"/>
        <end position="265"/>
    </location>
    <ligand>
        <name>Mo-bis(molybdopterin guanine dinucleotide)</name>
        <dbReference type="ChEBI" id="CHEBI:60539"/>
    </ligand>
</feature>
<comment type="function">
    <text evidence="1">Required for formate dehydrogenase (FDH) activity. Acts as a sulfur carrier protein that transfers sulfur from IscS to the molybdenum cofactor prior to its insertion into FDH.</text>
</comment>
<comment type="subcellular location">
    <subcellularLocation>
        <location evidence="1">Cytoplasm</location>
    </subcellularLocation>
</comment>
<comment type="similarity">
    <text evidence="1">Belongs to the FdhD family.</text>
</comment>
<reference key="1">
    <citation type="submission" date="2008-02" db="EMBL/GenBank/DDBJ databases">
        <title>Complete sequence of Escherichia coli C str. ATCC 8739.</title>
        <authorList>
            <person name="Copeland A."/>
            <person name="Lucas S."/>
            <person name="Lapidus A."/>
            <person name="Glavina del Rio T."/>
            <person name="Dalin E."/>
            <person name="Tice H."/>
            <person name="Bruce D."/>
            <person name="Goodwin L."/>
            <person name="Pitluck S."/>
            <person name="Kiss H."/>
            <person name="Brettin T."/>
            <person name="Detter J.C."/>
            <person name="Han C."/>
            <person name="Kuske C.R."/>
            <person name="Schmutz J."/>
            <person name="Larimer F."/>
            <person name="Land M."/>
            <person name="Hauser L."/>
            <person name="Kyrpides N."/>
            <person name="Mikhailova N."/>
            <person name="Ingram L."/>
            <person name="Richardson P."/>
        </authorList>
    </citation>
    <scope>NUCLEOTIDE SEQUENCE [LARGE SCALE GENOMIC DNA]</scope>
    <source>
        <strain>ATCC 8739 / DSM 1576 / NBRC 3972 / NCIMB 8545 / WDCM 00012 / Crooks</strain>
    </source>
</reference>
<accession>B1IVI3</accession>
<proteinExistence type="inferred from homology"/>